<feature type="chain" id="PRO_0000053616" description="Estrogen receptor">
    <location>
        <begin position="1"/>
        <end position="596"/>
    </location>
</feature>
<feature type="domain" description="NR LBD" evidence="6">
    <location>
        <begin position="312"/>
        <end position="548"/>
    </location>
</feature>
<feature type="DNA-binding region" description="Nuclear receptor" evidence="5">
    <location>
        <begin position="186"/>
        <end position="251"/>
    </location>
</feature>
<feature type="zinc finger region" description="NR C4-type" evidence="5">
    <location>
        <begin position="186"/>
        <end position="206"/>
    </location>
</feature>
<feature type="zinc finger region" description="NR C4-type" evidence="5">
    <location>
        <begin position="222"/>
        <end position="246"/>
    </location>
</feature>
<feature type="region of interest" description="Modulating (transactivation AF-1); mediates interaction with MACROD1" evidence="1">
    <location>
        <begin position="1"/>
        <end position="185"/>
    </location>
</feature>
<feature type="region of interest" description="Interaction with DDX5; self-association" evidence="1">
    <location>
        <begin position="36"/>
        <end position="175"/>
    </location>
</feature>
<feature type="region of interest" description="Required for interaction with NCOA1" evidence="1">
    <location>
        <begin position="36"/>
        <end position="48"/>
    </location>
</feature>
<feature type="region of interest" description="Disordered" evidence="7">
    <location>
        <begin position="144"/>
        <end position="175"/>
    </location>
</feature>
<feature type="region of interest" description="Mediates interaction with DNTTIP2" evidence="1">
    <location>
        <begin position="186"/>
        <end position="311"/>
    </location>
</feature>
<feature type="region of interest" description="Hinge">
    <location>
        <begin position="252"/>
        <end position="311"/>
    </location>
</feature>
<feature type="region of interest" description="Disordered" evidence="7">
    <location>
        <begin position="259"/>
        <end position="285"/>
    </location>
</feature>
<feature type="region of interest" description="Interaction with AKAP13" evidence="1">
    <location>
        <begin position="263"/>
        <end position="596"/>
    </location>
</feature>
<feature type="region of interest" description="Self-association" evidence="1">
    <location>
        <begin position="265"/>
        <end position="595"/>
    </location>
</feature>
<feature type="region of interest" description="Transactivation AF-2" evidence="1">
    <location>
        <begin position="312"/>
        <end position="595"/>
    </location>
</feature>
<feature type="compositionally biased region" description="Basic and acidic residues" evidence="7">
    <location>
        <begin position="155"/>
        <end position="166"/>
    </location>
</feature>
<feature type="compositionally biased region" description="Basic residues" evidence="7">
    <location>
        <begin position="259"/>
        <end position="270"/>
    </location>
</feature>
<feature type="binding site" evidence="2">
    <location>
        <position position="354"/>
    </location>
    <ligand>
        <name>17beta-estradiol</name>
        <dbReference type="ChEBI" id="CHEBI:16469"/>
    </ligand>
</feature>
<feature type="binding site" evidence="2">
    <location>
        <position position="395"/>
    </location>
    <ligand>
        <name>17beta-estradiol</name>
        <dbReference type="ChEBI" id="CHEBI:16469"/>
    </ligand>
</feature>
<feature type="binding site" evidence="2">
    <location>
        <position position="525"/>
    </location>
    <ligand>
        <name>17beta-estradiol</name>
        <dbReference type="ChEBI" id="CHEBI:16469"/>
    </ligand>
</feature>
<feature type="modified residue" description="Phosphoserine; by CDK2" evidence="2">
    <location>
        <position position="104"/>
    </location>
</feature>
<feature type="modified residue" description="Phosphoserine; by CDK2" evidence="2">
    <location>
        <position position="106"/>
    </location>
</feature>
<feature type="modified residue" description="Phosphoserine" evidence="2">
    <location>
        <position position="119"/>
    </location>
</feature>
<feature type="modified residue" description="Phosphoserine; by CK2" evidence="2">
    <location>
        <position position="168"/>
    </location>
</feature>
<feature type="modified residue" description="Asymmetric dimethylarginine; by PRMT1" evidence="2">
    <location>
        <position position="261"/>
    </location>
</feature>
<feature type="modified residue" description="Phosphotyrosine; by Tyr-kinases" evidence="2">
    <location>
        <position position="538"/>
    </location>
</feature>
<feature type="lipid moiety-binding region" description="S-palmitoyl cysteine" evidence="1">
    <location>
        <position position="448"/>
    </location>
</feature>
<feature type="glycosylation site" description="O-linked (GlcNAc) serine" evidence="1">
    <location>
        <position position="10"/>
    </location>
</feature>
<feature type="glycosylation site" description="O-linked (GlcNAc) threonine" evidence="1">
    <location>
        <position position="572"/>
    </location>
</feature>
<feature type="sequence conflict" description="In Ref. 2; CAA47317." evidence="8" ref="2">
    <original>A</original>
    <variation>T</variation>
    <location>
        <position position="372"/>
    </location>
</feature>
<feature type="sequence conflict" description="In Ref. 3; AAB09548." evidence="8" ref="3">
    <original>E</original>
    <variation>A</variation>
    <location>
        <position position="386"/>
    </location>
</feature>
<feature type="sequence conflict" description="In Ref. 2; CAA47317." evidence="8" ref="2">
    <original>G</original>
    <variation>V</variation>
    <location>
        <position position="401"/>
    </location>
</feature>
<feature type="sequence conflict" description="In Ref. 2; CAA47317." evidence="8" ref="2">
    <original>R</original>
    <variation>K</variation>
    <location>
        <position position="468"/>
    </location>
</feature>
<feature type="sequence conflict" description="In Ref. 3; AAB09548." evidence="8" ref="3">
    <original>A</original>
    <variation>D</variation>
    <location>
        <position position="492"/>
    </location>
</feature>
<feature type="sequence conflict" description="In Ref. 2; CAA47317." evidence="8" ref="2">
    <original>R</original>
    <variation>Q</variation>
    <location>
        <position position="503"/>
    </location>
</feature>
<feature type="sequence conflict" description="In Ref. 3; AAB09548." evidence="8" ref="3">
    <original>A</original>
    <variation>G</variation>
    <location>
        <position position="506"/>
    </location>
</feature>
<organism>
    <name type="scientific">Bos taurus</name>
    <name type="common">Bovine</name>
    <dbReference type="NCBI Taxonomy" id="9913"/>
    <lineage>
        <taxon>Eukaryota</taxon>
        <taxon>Metazoa</taxon>
        <taxon>Chordata</taxon>
        <taxon>Craniata</taxon>
        <taxon>Vertebrata</taxon>
        <taxon>Euteleostomi</taxon>
        <taxon>Mammalia</taxon>
        <taxon>Eutheria</taxon>
        <taxon>Laurasiatheria</taxon>
        <taxon>Artiodactyla</taxon>
        <taxon>Ruminantia</taxon>
        <taxon>Pecora</taxon>
        <taxon>Bovidae</taxon>
        <taxon>Bovinae</taxon>
        <taxon>Bos</taxon>
    </lineage>
</organism>
<evidence type="ECO:0000250" key="1"/>
<evidence type="ECO:0000250" key="2">
    <source>
        <dbReference type="UniProtKB" id="P03372"/>
    </source>
</evidence>
<evidence type="ECO:0000250" key="3">
    <source>
        <dbReference type="UniProtKB" id="P06211"/>
    </source>
</evidence>
<evidence type="ECO:0000250" key="4">
    <source>
        <dbReference type="UniProtKB" id="P19785"/>
    </source>
</evidence>
<evidence type="ECO:0000255" key="5">
    <source>
        <dbReference type="PROSITE-ProRule" id="PRU00407"/>
    </source>
</evidence>
<evidence type="ECO:0000255" key="6">
    <source>
        <dbReference type="PROSITE-ProRule" id="PRU01189"/>
    </source>
</evidence>
<evidence type="ECO:0000256" key="7">
    <source>
        <dbReference type="SAM" id="MobiDB-lite"/>
    </source>
</evidence>
<evidence type="ECO:0000305" key="8"/>
<keyword id="KW-0010">Activator</keyword>
<keyword id="KW-1003">Cell membrane</keyword>
<keyword id="KW-0963">Cytoplasm</keyword>
<keyword id="KW-0238">DNA-binding</keyword>
<keyword id="KW-0325">Glycoprotein</keyword>
<keyword id="KW-0333">Golgi apparatus</keyword>
<keyword id="KW-0446">Lipid-binding</keyword>
<keyword id="KW-0449">Lipoprotein</keyword>
<keyword id="KW-0472">Membrane</keyword>
<keyword id="KW-0479">Metal-binding</keyword>
<keyword id="KW-0488">Methylation</keyword>
<keyword id="KW-0539">Nucleus</keyword>
<keyword id="KW-0564">Palmitate</keyword>
<keyword id="KW-0597">Phosphoprotein</keyword>
<keyword id="KW-0675">Receptor</keyword>
<keyword id="KW-1185">Reference proteome</keyword>
<keyword id="KW-0754">Steroid-binding</keyword>
<keyword id="KW-0804">Transcription</keyword>
<keyword id="KW-0805">Transcription regulation</keyword>
<keyword id="KW-0832">Ubl conjugation</keyword>
<keyword id="KW-0862">Zinc</keyword>
<keyword id="KW-0863">Zinc-finger</keyword>
<name>ESR1_BOVIN</name>
<comment type="function">
    <text evidence="1 3">Nuclear hormone receptor. The steroid hormones and their receptors are involved in the regulation of eukaryotic gene expression and affect cellular proliferation and differentiation in target tissues. Ligand-dependent nuclear transactivation involves either direct homodimer binding to a palindromic estrogen response element (ERE) sequence or association with other DNA-binding transcription factors, such as AP-1/c-Jun, c-Fos, ATF-2, Sp1 and Sp3, to mediate ERE-independent signaling. Ligand binding induces a conformational change allowing subsequent or combinatorial association with multiprotein coactivator complexes through LXXLL motifs of their respective components. Mutual transrepression occurs between the estrogen receptor (ER) and NF-kappa-B in a cell-type specific manner. Decreases NF-kappa-B DNA-binding activity and inhibits NF-kappa-B-mediated transcription from the IL6 promoter and displace RELA/p65 and associated coregulators from the promoter. Recruited to the NF-kappa-B response element of the CCL2 and IL8 promoters and can displace CREBBP. Present with NF-kappa-B components RELA/p65 and NFKB1/p50 on ERE sequences. Can also act synergistically with NF-kappa-B to activate transcription involving respective recruitment adjacent response elements; the function involves CREBBP. Can activate the transcriptional activity of TFF1. Also mediates membrane-initiated estrogen signaling involving various kinase cascades. Essential for MTA1-mediated transcriptional regulation of BRCA1 and BCAS3 (By similarity). Maintains neuronal survival in response to ischemic reperfusion injury when in the presence of circulating estradiol (17-beta-estradiol/E2) (By similarity).</text>
</comment>
<comment type="subunit">
    <text evidence="2 3 4">Binds DNA as a homodimer. Can form a heterodimer with ESR2. Interacts with coactivator NCOA5. Interacts with PELP1, the interaction is enhanced by 17-beta-estradiol; the interaction increases ESR1 transcriptional activity (By similarity). Interacts with NCOA7; the interaction is ligand-inducible. Interacts with AKAP13, CUEDC2, HEXIM1, KDM5A, MAP1S, SMARD1, and UBE1C. Interacts with MUC1; the interaction is stimulated by 7 beta-estradiol (E2) and enhances ESR1-mediated transcription. Interacts with DNTTIP2, and UIMC1. Interacts with KMT2D/MLL2. Interacts with ATAD2; the interaction is enhanced by estradiol. Interacts with KIF18A and LDB1. Interacts with RLIM (via its C-terminus). Interacts with MACROD1. Interacts with SH2D4A and PLCG. Interacts with SH2D4A; the interaction blocks binding to PLCG and inhibits estrogen-induced cell proliferation. Interacts with DYNLL1. Interacts with CCDC62; the interaction requires estradiol and appears to enhance the transcription of target genes. Interacts with NR2C1; the interaction prevents homodimerization of ESR1 and suppresses its transcriptional activity and cell growth. Interacts with DNAAF4. Interacts with PRMT2. Interacts with RBFOX2. Interacts with EP300; the interaction is estrogen-dependent and enhanced by CITED1. Interacts with CITED1; the interaction is estrogen-dependent. Interacts with FAM120B, FOXL2, PHB2 and SLC30A9. Interacts with coactivators NCOA3 and NCOA6. Interacts with STK3/MST2 only in the presence of SAV1 and vice-versa. Binds to CSNK1D. Interacts with NCOA2; NCOA2 can interact with ESR1 AF-1 and AF-2 domains simultaneously and mediate their transcriptional synergy. Interacts with DDX5. Interacts with NCOA1; the interaction seems to require a self-association of N-terminal and C-terminal regions. Interacts with ZNF366, DDX17, NFKB1, RELA, SP1 and SP3. Interacts with NRIP1. Interacts with GPER1; the interaction occurs in an estrogen-dependent manner. Interacts with CLOCK and the interaction is stimulated by estrogen. Interacts with TRIP4 (ufmylated); estrogen dependent. Interacts with LMTK3; the interaction phosphorylates ESR1 (in vitro) and protects it against proteasomal degradation. Interacts with CCAR2 (via N-terminus) in a ligand-independent manner. Interacts with ZFHX3. Interacts with SFR1 in a ligand-dependent and -independent manner. Interacts with DCAF13, LATS1 and DCAF1; regulates ESR1 ubiquitination and ubiquitin-mediated proteasomal degradation. Interacts (via DNA-binding domain) with POU4F2 (C-terminus); this interaction increases the estrogen receptor ESR1 transcriptional activity in a DNA- and ligand 17-beta-estradiol-independent manner. Interacts with ESRRB isoform 1. Interacts with UBE3A and WBP2. Interacts with GTF2B. Interacts with RBM39. In the absence of hormonal ligand, interacts with TACC1 (By similarity). Interacts with PI3KR1 or PI3KR2 and PTK2/FAK1 (By similarity). Interacts with SRC (By similarity). Interacts with BAG1; the interaction is promoted in the absence of estradiol (17-beta-estradiol/E2) (By similarity). Interacts with and ubiquitinated by STUB1; the interaction is promoted in the absence of estradiol (17-beta-estradiol/E2) (By similarity). Interacts with NEDD8 (By similarity).</text>
</comment>
<comment type="subcellular location">
    <subcellularLocation>
        <location evidence="5">Nucleus</location>
    </subcellularLocation>
    <subcellularLocation>
        <location evidence="1">Cytoplasm</location>
    </subcellularLocation>
    <subcellularLocation>
        <location evidence="1">Golgi apparatus</location>
    </subcellularLocation>
    <subcellularLocation>
        <location evidence="1">Cell membrane</location>
    </subcellularLocation>
    <text evidence="1">Colocalizes with ZDHHC7 and ZDHHC21 in the Golgi apparatus where most probably palmitoylation occurs. Associated with the plasma membrane when palmitoylated.</text>
</comment>
<comment type="domain">
    <text evidence="1">Composed of three domains: a modulating N-terminal domain, a DNA-binding domain and a C-terminal ligand-binding domain. The modulating domain, also known as A/B or AF-1 domain has a ligand-independent transactivation function. The C-terminus contains a ligand-dependent transactivation domain, also known as E/F or AF-2 domain which overlaps with the ligand binding domain. AF-1 and AF-2 activate transcription independently and synergistically and act in a promoter- and cell-specific manner (By similarity).</text>
</comment>
<comment type="PTM">
    <text evidence="1">Glycosylated; contains N-acetylglucosamine, probably O-linked.</text>
</comment>
<comment type="PTM">
    <text evidence="2 3">Ubiquitinated; regulated by LATS1 via DCAF1 it leads to ESR1 proteasomal degradation. Deubiquitinated by OTUB1 (By similarity). Ubiquitinated by STUB1/CHIP; in the CA1 hippocampal region following loss of endogenous circulating estradiol (17-beta-estradiol/E2) (By similarity). Ubiquitinated by UBR5, leading to its degradation: UBR5 specifically recognizes and binds ligand-bound ESR1 when it is not associated with coactivators (NCOAs). In presence of NCOAs, the UBR5-degron is not accessible, preventing its ubiquitination and degradation (By similarity).</text>
</comment>
<comment type="PTM">
    <text evidence="2">Phosphorylated by cyclin A/CDK2 and CK1. Phosphorylation probably enhances transcriptional activity. Dephosphorylation at Ser-119 by PPP5C inhibits its transactivation activity (By similarity). Phosphorylated by LMTK3 (in vitro) (By similarity).</text>
</comment>
<comment type="PTM">
    <text evidence="1">Palmitoylated at Cys-448 by ZDHHC7 and ZDHHC21. Palmitoylation is required for plasma membrane targeting and for rapid intracellular signaling via ERK and AKT kinases and cAMP generation, but not for signaling mediated by the nuclear hormone receptor (By similarity).</text>
</comment>
<comment type="PTM">
    <text evidence="2">Dimethylated by PRMT1 at Arg-261. The methylation may favor cytoplasmic localization. Demethylated by JMJD6 at Arg-261.</text>
</comment>
<comment type="similarity">
    <text evidence="8">Belongs to the nuclear hormone receptor family. NR3 subfamily.</text>
</comment>
<gene>
    <name type="primary">ESR1</name>
    <name type="synonym">ESR</name>
    <name type="synonym">NR3A1</name>
</gene>
<dbReference type="EMBL" id="AY538775">
    <property type="protein sequence ID" value="AAS46251.1"/>
    <property type="molecule type" value="mRNA"/>
</dbReference>
<dbReference type="EMBL" id="X66841">
    <property type="protein sequence ID" value="CAA47317.1"/>
    <property type="molecule type" value="mRNA"/>
</dbReference>
<dbReference type="EMBL" id="U64962">
    <property type="protein sequence ID" value="AAB09548.1"/>
    <property type="molecule type" value="mRNA"/>
</dbReference>
<dbReference type="PIR" id="S26595">
    <property type="entry name" value="S26595"/>
</dbReference>
<dbReference type="RefSeq" id="NP_001001443.1">
    <property type="nucleotide sequence ID" value="NM_001001443.1"/>
</dbReference>
<dbReference type="RefSeq" id="XP_024852188.1">
    <property type="nucleotide sequence ID" value="XM_024996420.2"/>
</dbReference>
<dbReference type="SMR" id="P49884"/>
<dbReference type="BioGRID" id="160595">
    <property type="interactions" value="1"/>
</dbReference>
<dbReference type="FunCoup" id="P49884">
    <property type="interactions" value="272"/>
</dbReference>
<dbReference type="STRING" id="9913.ENSBTAP00000074449"/>
<dbReference type="BindingDB" id="P49884"/>
<dbReference type="ChEMBL" id="CHEMBL2930"/>
<dbReference type="GlyConnect" id="143">
    <property type="glycosylation" value="1 O-GlcNAc glycan"/>
</dbReference>
<dbReference type="GlyCosmos" id="P49884">
    <property type="glycosylation" value="2 sites, 1 glycan"/>
</dbReference>
<dbReference type="GlyGen" id="P49884">
    <property type="glycosylation" value="3 sites, 1 O-linked glycan (1 site)"/>
</dbReference>
<dbReference type="PaxDb" id="9913-ENSBTAP00000009422"/>
<dbReference type="ABCD" id="P49884">
    <property type="antibodies" value="2 sequenced antibodies"/>
</dbReference>
<dbReference type="Ensembl" id="ENSBTAT00000009422.6">
    <property type="protein sequence ID" value="ENSBTAP00000009422.6"/>
    <property type="gene ID" value="ENSBTAG00000007159.7"/>
</dbReference>
<dbReference type="GeneID" id="407238"/>
<dbReference type="KEGG" id="bta:407238"/>
<dbReference type="CTD" id="2099"/>
<dbReference type="VEuPathDB" id="HostDB:ENSBTAG00000007159"/>
<dbReference type="VGNC" id="VGNC:53791">
    <property type="gene designation" value="ESR1"/>
</dbReference>
<dbReference type="eggNOG" id="KOG3575">
    <property type="taxonomic scope" value="Eukaryota"/>
</dbReference>
<dbReference type="GeneTree" id="ENSGT00940000158133"/>
<dbReference type="InParanoid" id="P49884"/>
<dbReference type="OMA" id="QCDARDE"/>
<dbReference type="OrthoDB" id="5799427at2759"/>
<dbReference type="Reactome" id="R-BTA-1251985">
    <property type="pathway name" value="Nuclear signaling by ERBB4"/>
</dbReference>
<dbReference type="Reactome" id="R-BTA-1257604">
    <property type="pathway name" value="PIP3 activates AKT signaling"/>
</dbReference>
<dbReference type="Reactome" id="R-BTA-383280">
    <property type="pathway name" value="Nuclear Receptor transcription pathway"/>
</dbReference>
<dbReference type="Reactome" id="R-BTA-4090294">
    <property type="pathway name" value="SUMOylation of intracellular receptors"/>
</dbReference>
<dbReference type="Reactome" id="R-BTA-5689896">
    <property type="pathway name" value="Ovarian tumor domain proteases"/>
</dbReference>
<dbReference type="Reactome" id="R-BTA-6811558">
    <property type="pathway name" value="PI5P, PP2A and IER3 Regulate PI3K/AKT Signaling"/>
</dbReference>
<dbReference type="Reactome" id="R-BTA-8866910">
    <property type="pathway name" value="TFAP2 (AP-2) family regulates transcription of growth factors and their receptors"/>
</dbReference>
<dbReference type="Reactome" id="R-BTA-8931987">
    <property type="pathway name" value="RUNX1 regulates estrogen receptor mediated transcription"/>
</dbReference>
<dbReference type="Reactome" id="R-BTA-8939211">
    <property type="pathway name" value="ESR-mediated signaling"/>
</dbReference>
<dbReference type="Reactome" id="R-BTA-9009391">
    <property type="pathway name" value="Extra-nuclear estrogen signaling"/>
</dbReference>
<dbReference type="Reactome" id="R-BTA-9018519">
    <property type="pathway name" value="Estrogen-dependent gene expression"/>
</dbReference>
<dbReference type="Reactome" id="R-BTA-9841251">
    <property type="pathway name" value="Mitochondrial unfolded protein response (UPRmt)"/>
</dbReference>
<dbReference type="PRO" id="PR:P49884"/>
<dbReference type="Proteomes" id="UP000009136">
    <property type="component" value="Chromosome 9"/>
</dbReference>
<dbReference type="Bgee" id="ENSBTAG00000007159">
    <property type="expression patterns" value="Expressed in oviduct epithelium and 86 other cell types or tissues"/>
</dbReference>
<dbReference type="GO" id="GO:0000785">
    <property type="term" value="C:chromatin"/>
    <property type="evidence" value="ECO:0000318"/>
    <property type="project" value="GO_Central"/>
</dbReference>
<dbReference type="GO" id="GO:0005737">
    <property type="term" value="C:cytoplasm"/>
    <property type="evidence" value="ECO:0000250"/>
    <property type="project" value="UniProtKB"/>
</dbReference>
<dbReference type="GO" id="GO:0000791">
    <property type="term" value="C:euchromatin"/>
    <property type="evidence" value="ECO:0007669"/>
    <property type="project" value="Ensembl"/>
</dbReference>
<dbReference type="GO" id="GO:0005794">
    <property type="term" value="C:Golgi apparatus"/>
    <property type="evidence" value="ECO:0007669"/>
    <property type="project" value="UniProtKB-SubCell"/>
</dbReference>
<dbReference type="GO" id="GO:0005634">
    <property type="term" value="C:nucleus"/>
    <property type="evidence" value="ECO:0000314"/>
    <property type="project" value="AgBase"/>
</dbReference>
<dbReference type="GO" id="GO:0005886">
    <property type="term" value="C:plasma membrane"/>
    <property type="evidence" value="ECO:0007669"/>
    <property type="project" value="UniProtKB-SubCell"/>
</dbReference>
<dbReference type="GO" id="GO:0005667">
    <property type="term" value="C:transcription regulator complex"/>
    <property type="evidence" value="ECO:0007669"/>
    <property type="project" value="Ensembl"/>
</dbReference>
<dbReference type="GO" id="GO:0071889">
    <property type="term" value="F:14-3-3 protein binding"/>
    <property type="evidence" value="ECO:0007669"/>
    <property type="project" value="Ensembl"/>
</dbReference>
<dbReference type="GO" id="GO:0051117">
    <property type="term" value="F:ATPase binding"/>
    <property type="evidence" value="ECO:0007669"/>
    <property type="project" value="Ensembl"/>
</dbReference>
<dbReference type="GO" id="GO:0008013">
    <property type="term" value="F:beta-catenin binding"/>
    <property type="evidence" value="ECO:0007669"/>
    <property type="project" value="Ensembl"/>
</dbReference>
<dbReference type="GO" id="GO:0003682">
    <property type="term" value="F:chromatin binding"/>
    <property type="evidence" value="ECO:0007669"/>
    <property type="project" value="Ensembl"/>
</dbReference>
<dbReference type="GO" id="GO:0001228">
    <property type="term" value="F:DNA-binding transcription activator activity, RNA polymerase II-specific"/>
    <property type="evidence" value="ECO:0007669"/>
    <property type="project" value="Ensembl"/>
</dbReference>
<dbReference type="GO" id="GO:0034056">
    <property type="term" value="F:estrogen response element binding"/>
    <property type="evidence" value="ECO:0000318"/>
    <property type="project" value="GO_Central"/>
</dbReference>
<dbReference type="GO" id="GO:0042802">
    <property type="term" value="F:identical protein binding"/>
    <property type="evidence" value="ECO:0007669"/>
    <property type="project" value="Ensembl"/>
</dbReference>
<dbReference type="GO" id="GO:0030284">
    <property type="term" value="F:nuclear estrogen receptor activity"/>
    <property type="evidence" value="ECO:0007669"/>
    <property type="project" value="Ensembl"/>
</dbReference>
<dbReference type="GO" id="GO:0030331">
    <property type="term" value="F:nuclear estrogen receptor binding"/>
    <property type="evidence" value="ECO:0007669"/>
    <property type="project" value="Ensembl"/>
</dbReference>
<dbReference type="GO" id="GO:0004879">
    <property type="term" value="F:nuclear receptor activity"/>
    <property type="evidence" value="ECO:0000318"/>
    <property type="project" value="GO_Central"/>
</dbReference>
<dbReference type="GO" id="GO:0019901">
    <property type="term" value="F:protein kinase binding"/>
    <property type="evidence" value="ECO:0007669"/>
    <property type="project" value="Ensembl"/>
</dbReference>
<dbReference type="GO" id="GO:0043565">
    <property type="term" value="F:sequence-specific DNA binding"/>
    <property type="evidence" value="ECO:0000250"/>
    <property type="project" value="UniProtKB"/>
</dbReference>
<dbReference type="GO" id="GO:0005496">
    <property type="term" value="F:steroid binding"/>
    <property type="evidence" value="ECO:0000250"/>
    <property type="project" value="UniProtKB"/>
</dbReference>
<dbReference type="GO" id="GO:0017025">
    <property type="term" value="F:TBP-class protein binding"/>
    <property type="evidence" value="ECO:0007669"/>
    <property type="project" value="Ensembl"/>
</dbReference>
<dbReference type="GO" id="GO:0001093">
    <property type="term" value="F:TFIIB-class transcription factor binding"/>
    <property type="evidence" value="ECO:0007669"/>
    <property type="project" value="Ensembl"/>
</dbReference>
<dbReference type="GO" id="GO:0001223">
    <property type="term" value="F:transcription coactivator binding"/>
    <property type="evidence" value="ECO:0007669"/>
    <property type="project" value="Ensembl"/>
</dbReference>
<dbReference type="GO" id="GO:0001222">
    <property type="term" value="F:transcription corepressor binding"/>
    <property type="evidence" value="ECO:0007669"/>
    <property type="project" value="Ensembl"/>
</dbReference>
<dbReference type="GO" id="GO:0008270">
    <property type="term" value="F:zinc ion binding"/>
    <property type="evidence" value="ECO:0007669"/>
    <property type="project" value="UniProtKB-KW"/>
</dbReference>
<dbReference type="GO" id="GO:0008209">
    <property type="term" value="P:androgen metabolic process"/>
    <property type="evidence" value="ECO:0007669"/>
    <property type="project" value="Ensembl"/>
</dbReference>
<dbReference type="GO" id="GO:0001547">
    <property type="term" value="P:antral ovarian follicle growth"/>
    <property type="evidence" value="ECO:0007669"/>
    <property type="project" value="Ensembl"/>
</dbReference>
<dbReference type="GO" id="GO:0071392">
    <property type="term" value="P:cellular response to estradiol stimulus"/>
    <property type="evidence" value="ECO:0000250"/>
    <property type="project" value="UniProtKB"/>
</dbReference>
<dbReference type="GO" id="GO:0071391">
    <property type="term" value="P:cellular response to estrogen stimulus"/>
    <property type="evidence" value="ECO:0000318"/>
    <property type="project" value="GO_Central"/>
</dbReference>
<dbReference type="GO" id="GO:0002064">
    <property type="term" value="P:epithelial cell development"/>
    <property type="evidence" value="ECO:0007669"/>
    <property type="project" value="Ensembl"/>
</dbReference>
<dbReference type="GO" id="GO:0060750">
    <property type="term" value="P:epithelial cell proliferation involved in mammary gland duct elongation"/>
    <property type="evidence" value="ECO:0007669"/>
    <property type="project" value="Ensembl"/>
</dbReference>
<dbReference type="GO" id="GO:0030520">
    <property type="term" value="P:estrogen receptor signaling pathway"/>
    <property type="evidence" value="ECO:0000318"/>
    <property type="project" value="GO_Central"/>
</dbReference>
<dbReference type="GO" id="GO:0048144">
    <property type="term" value="P:fibroblast proliferation"/>
    <property type="evidence" value="ECO:0007669"/>
    <property type="project" value="Ensembl"/>
</dbReference>
<dbReference type="GO" id="GO:0008584">
    <property type="term" value="P:male gonad development"/>
    <property type="evidence" value="ECO:0007669"/>
    <property type="project" value="Ensembl"/>
</dbReference>
<dbReference type="GO" id="GO:0060749">
    <property type="term" value="P:mammary gland alveolus development"/>
    <property type="evidence" value="ECO:0007669"/>
    <property type="project" value="Ensembl"/>
</dbReference>
<dbReference type="GO" id="GO:0060745">
    <property type="term" value="P:mammary gland branching involved in pregnancy"/>
    <property type="evidence" value="ECO:0007669"/>
    <property type="project" value="Ensembl"/>
</dbReference>
<dbReference type="GO" id="GO:0043124">
    <property type="term" value="P:negative regulation of canonical NF-kappaB signal transduction"/>
    <property type="evidence" value="ECO:0000250"/>
    <property type="project" value="UniProtKB"/>
</dbReference>
<dbReference type="GO" id="GO:0043433">
    <property type="term" value="P:negative regulation of DNA-binding transcription factor activity"/>
    <property type="evidence" value="ECO:0000250"/>
    <property type="project" value="UniProtKB"/>
</dbReference>
<dbReference type="GO" id="GO:0010629">
    <property type="term" value="P:negative regulation of gene expression"/>
    <property type="evidence" value="ECO:0007669"/>
    <property type="project" value="Ensembl"/>
</dbReference>
<dbReference type="GO" id="GO:1902894">
    <property type="term" value="P:negative regulation of miRNA transcription"/>
    <property type="evidence" value="ECO:0007669"/>
    <property type="project" value="Ensembl"/>
</dbReference>
<dbReference type="GO" id="GO:0034392">
    <property type="term" value="P:negative regulation of smooth muscle cell apoptotic process"/>
    <property type="evidence" value="ECO:0000250"/>
    <property type="project" value="UniProtKB"/>
</dbReference>
<dbReference type="GO" id="GO:0000122">
    <property type="term" value="P:negative regulation of transcription by RNA polymerase II"/>
    <property type="evidence" value="ECO:0007669"/>
    <property type="project" value="Ensembl"/>
</dbReference>
<dbReference type="GO" id="GO:0030518">
    <property type="term" value="P:nuclear receptor-mediated steroid hormone signaling pathway"/>
    <property type="evidence" value="ECO:0000250"/>
    <property type="project" value="UniProtKB"/>
</dbReference>
<dbReference type="GO" id="GO:0007200">
    <property type="term" value="P:phospholipase C-activating G protein-coupled receptor signaling pathway"/>
    <property type="evidence" value="ECO:0000250"/>
    <property type="project" value="UniProtKB"/>
</dbReference>
<dbReference type="GO" id="GO:0007204">
    <property type="term" value="P:positive regulation of cytosolic calcium ion concentration"/>
    <property type="evidence" value="ECO:0000250"/>
    <property type="project" value="UniProtKB"/>
</dbReference>
<dbReference type="GO" id="GO:0051091">
    <property type="term" value="P:positive regulation of DNA-binding transcription factor activity"/>
    <property type="evidence" value="ECO:0000250"/>
    <property type="project" value="UniProtKB"/>
</dbReference>
<dbReference type="GO" id="GO:0045893">
    <property type="term" value="P:positive regulation of DNA-templated transcription"/>
    <property type="evidence" value="ECO:0000250"/>
    <property type="project" value="UniProtKB"/>
</dbReference>
<dbReference type="GO" id="GO:0048146">
    <property type="term" value="P:positive regulation of fibroblast proliferation"/>
    <property type="evidence" value="ECO:0007669"/>
    <property type="project" value="Ensembl"/>
</dbReference>
<dbReference type="GO" id="GO:0045429">
    <property type="term" value="P:positive regulation of nitric oxide biosynthetic process"/>
    <property type="evidence" value="ECO:0000250"/>
    <property type="project" value="UniProtKB"/>
</dbReference>
<dbReference type="GO" id="GO:0051000">
    <property type="term" value="P:positive regulation of nitric-oxide synthase activity"/>
    <property type="evidence" value="ECO:0000250"/>
    <property type="project" value="UniProtKB"/>
</dbReference>
<dbReference type="GO" id="GO:0060527">
    <property type="term" value="P:prostate epithelial cord arborization involved in prostate glandular acinus morphogenesis"/>
    <property type="evidence" value="ECO:0007669"/>
    <property type="project" value="Ensembl"/>
</dbReference>
<dbReference type="GO" id="GO:0060523">
    <property type="term" value="P:prostate epithelial cord elongation"/>
    <property type="evidence" value="ECO:0007669"/>
    <property type="project" value="Ensembl"/>
</dbReference>
<dbReference type="GO" id="GO:0071168">
    <property type="term" value="P:protein localization to chromatin"/>
    <property type="evidence" value="ECO:0007669"/>
    <property type="project" value="Ensembl"/>
</dbReference>
<dbReference type="GO" id="GO:0060687">
    <property type="term" value="P:regulation of branching involved in prostate gland morphogenesis"/>
    <property type="evidence" value="ECO:0007669"/>
    <property type="project" value="Ensembl"/>
</dbReference>
<dbReference type="GO" id="GO:1904035">
    <property type="term" value="P:regulation of epithelial cell apoptotic process"/>
    <property type="evidence" value="ECO:0007669"/>
    <property type="project" value="Ensembl"/>
</dbReference>
<dbReference type="GO" id="GO:0050727">
    <property type="term" value="P:regulation of inflammatory response"/>
    <property type="evidence" value="ECO:0007669"/>
    <property type="project" value="Ensembl"/>
</dbReference>
<dbReference type="GO" id="GO:0034121">
    <property type="term" value="P:regulation of toll-like receptor signaling pathway"/>
    <property type="evidence" value="ECO:0007669"/>
    <property type="project" value="Ensembl"/>
</dbReference>
<dbReference type="GO" id="GO:0006357">
    <property type="term" value="P:regulation of transcription by RNA polymerase II"/>
    <property type="evidence" value="ECO:0000318"/>
    <property type="project" value="GO_Central"/>
</dbReference>
<dbReference type="GO" id="GO:0051123">
    <property type="term" value="P:RNA polymerase II preinitiation complex assembly"/>
    <property type="evidence" value="ECO:0007669"/>
    <property type="project" value="Ensembl"/>
</dbReference>
<dbReference type="GO" id="GO:0048863">
    <property type="term" value="P:stem cell differentiation"/>
    <property type="evidence" value="ECO:0007669"/>
    <property type="project" value="Ensembl"/>
</dbReference>
<dbReference type="GO" id="GO:0060065">
    <property type="term" value="P:uterus development"/>
    <property type="evidence" value="ECO:0007669"/>
    <property type="project" value="Ensembl"/>
</dbReference>
<dbReference type="GO" id="GO:0060068">
    <property type="term" value="P:vagina development"/>
    <property type="evidence" value="ECO:0007669"/>
    <property type="project" value="Ensembl"/>
</dbReference>
<dbReference type="CDD" id="cd07171">
    <property type="entry name" value="NR_DBD_ER"/>
    <property type="match status" value="1"/>
</dbReference>
<dbReference type="CDD" id="cd06949">
    <property type="entry name" value="NR_LBD_ER"/>
    <property type="match status" value="1"/>
</dbReference>
<dbReference type="FunFam" id="1.10.565.10:FF:000010">
    <property type="entry name" value="Estrogen receptor"/>
    <property type="match status" value="1"/>
</dbReference>
<dbReference type="FunFam" id="3.30.50.10:FF:000014">
    <property type="entry name" value="Estrogen receptor beta"/>
    <property type="match status" value="1"/>
</dbReference>
<dbReference type="Gene3D" id="3.30.50.10">
    <property type="entry name" value="Erythroid Transcription Factor GATA-1, subunit A"/>
    <property type="match status" value="1"/>
</dbReference>
<dbReference type="Gene3D" id="1.10.565.10">
    <property type="entry name" value="Retinoid X Receptor"/>
    <property type="match status" value="1"/>
</dbReference>
<dbReference type="InterPro" id="IPR024178">
    <property type="entry name" value="Est_rcpt/est-rel_rcp"/>
</dbReference>
<dbReference type="InterPro" id="IPR001292">
    <property type="entry name" value="Estr_rcpt"/>
</dbReference>
<dbReference type="InterPro" id="IPR046944">
    <property type="entry name" value="Estr_rcpt_N"/>
</dbReference>
<dbReference type="InterPro" id="IPR035500">
    <property type="entry name" value="NHR-like_dom_sf"/>
</dbReference>
<dbReference type="InterPro" id="IPR000536">
    <property type="entry name" value="Nucl_hrmn_rcpt_lig-bd"/>
</dbReference>
<dbReference type="InterPro" id="IPR050200">
    <property type="entry name" value="Nuclear_hormone_rcpt_NR3"/>
</dbReference>
<dbReference type="InterPro" id="IPR001723">
    <property type="entry name" value="Nuclear_hrmn_rcpt"/>
</dbReference>
<dbReference type="InterPro" id="IPR024736">
    <property type="entry name" value="Oestrogen-typ_rcpt_final_C_dom"/>
</dbReference>
<dbReference type="InterPro" id="IPR001628">
    <property type="entry name" value="Znf_hrmn_rcpt"/>
</dbReference>
<dbReference type="InterPro" id="IPR013088">
    <property type="entry name" value="Znf_NHR/GATA"/>
</dbReference>
<dbReference type="PANTHER" id="PTHR48092">
    <property type="entry name" value="KNIRPS-RELATED PROTEIN-RELATED"/>
    <property type="match status" value="1"/>
</dbReference>
<dbReference type="Pfam" id="PF12743">
    <property type="entry name" value="ESR1_C"/>
    <property type="match status" value="1"/>
</dbReference>
<dbReference type="Pfam" id="PF00104">
    <property type="entry name" value="Hormone_recep"/>
    <property type="match status" value="1"/>
</dbReference>
<dbReference type="Pfam" id="PF02159">
    <property type="entry name" value="Oest_recep"/>
    <property type="match status" value="1"/>
</dbReference>
<dbReference type="Pfam" id="PF00105">
    <property type="entry name" value="zf-C4"/>
    <property type="match status" value="1"/>
</dbReference>
<dbReference type="PIRSF" id="PIRSF500101">
    <property type="entry name" value="ER-a"/>
    <property type="match status" value="1"/>
</dbReference>
<dbReference type="PIRSF" id="PIRSF002527">
    <property type="entry name" value="ER-like_NR"/>
    <property type="match status" value="1"/>
</dbReference>
<dbReference type="PRINTS" id="PR00543">
    <property type="entry name" value="OESTROGENR"/>
</dbReference>
<dbReference type="PRINTS" id="PR00398">
    <property type="entry name" value="STRDHORMONER"/>
</dbReference>
<dbReference type="PRINTS" id="PR00047">
    <property type="entry name" value="STROIDFINGER"/>
</dbReference>
<dbReference type="SMART" id="SM00430">
    <property type="entry name" value="HOLI"/>
    <property type="match status" value="1"/>
</dbReference>
<dbReference type="SMART" id="SM00399">
    <property type="entry name" value="ZnF_C4"/>
    <property type="match status" value="1"/>
</dbReference>
<dbReference type="SUPFAM" id="SSF57716">
    <property type="entry name" value="Glucocorticoid receptor-like (DNA-binding domain)"/>
    <property type="match status" value="1"/>
</dbReference>
<dbReference type="SUPFAM" id="SSF48508">
    <property type="entry name" value="Nuclear receptor ligand-binding domain"/>
    <property type="match status" value="1"/>
</dbReference>
<dbReference type="PROSITE" id="PS51843">
    <property type="entry name" value="NR_LBD"/>
    <property type="match status" value="1"/>
</dbReference>
<dbReference type="PROSITE" id="PS00031">
    <property type="entry name" value="NUCLEAR_REC_DBD_1"/>
    <property type="match status" value="1"/>
</dbReference>
<dbReference type="PROSITE" id="PS51030">
    <property type="entry name" value="NUCLEAR_REC_DBD_2"/>
    <property type="match status" value="1"/>
</dbReference>
<protein>
    <recommendedName>
        <fullName>Estrogen receptor</fullName>
        <shortName>ER</shortName>
    </recommendedName>
    <alternativeName>
        <fullName>ER-alpha</fullName>
    </alternativeName>
    <alternativeName>
        <fullName>Estradiol receptor</fullName>
    </alternativeName>
    <alternativeName>
        <fullName>Nuclear receptor subfamily 3 group A member 1</fullName>
    </alternativeName>
</protein>
<sequence length="596" mass="66489">MTMTLHTKASGMALLHQIQANELEPLNRPQLKIPLERPLGEVYMDSSKPAVYNYPEGAAYDFNAAAPASAPVYGQSGLPYGPGSEAAAFGANGLGAFPPLNSVSPSPLVLLHPPPQPLSPFLHPHGQQVPYYLENESSGYAVREAGPPAYYRPNSDNRRQGGRERLASTSDKGSMAMESAKETRYCAVCNDYASGYHYGVWSCEGCKAFFKRSIQGHNDYMCPATNQCTIDKNRRKSCQACRLRKCYEVGMMKGGIRKDRRGGRMLKHKRQRDDGEGRNEAVPSGDMRAANLWPSPIMIKHTKKNSPVLSLTADQMISALLEAEPPIIYSEYDPTRPFSEASMMGLLTNLADRELVHMINWAKRVPGFVDLALHDQVHLLECAWLEILMIGLVWRSMEHPGKLLFAPNLLLDRNQGKCVEGMVEIFDMLLATSSRFRMMNLQGEEFVCLKSIILLNSGVYTFLSSTLRSLEEKDHIHRVLDKITDTLIHLMAKAGLTLQQQHRRLAQLLLILSHFRHMSNKGMEHLYSMKCKNVVPLYDLLLEMLDAHRLHAPANFGSAPPEDVNQSQLAPTGCTSSHSLQTYYITGEAENFPSTV</sequence>
<accession>P49884</accession>
<accession>Q6QIS5</accession>
<accession>Q95131</accession>
<reference key="1">
    <citation type="submission" date="2004-02" db="EMBL/GenBank/DDBJ databases">
        <authorList>
            <person name="Nishimura N."/>
            <person name="Tetsuka M."/>
        </authorList>
    </citation>
    <scope>NUCLEOTIDE SEQUENCE [MRNA]</scope>
    <source>
        <tissue>Uterus</tissue>
    </source>
</reference>
<reference key="2">
    <citation type="journal article" date="1995" name="Dtsch. Tierarztl. Wochenschr.">
        <title>Expression of estrogen and androgen receptor in the bovine gastrointestinal tract.</title>
        <authorList>
            <person name="Sauerwein H."/>
            <person name="Pfaffl M."/>
            <person name="Hagen-Mann K."/>
            <person name="Malucelli A."/>
            <person name="Meyer H.H."/>
        </authorList>
    </citation>
    <scope>NUCLEOTIDE SEQUENCE [MRNA] OF 371-503</scope>
    <source>
        <strain>Simmental</strain>
        <tissue>Uterus</tissue>
    </source>
</reference>
<reference key="3">
    <citation type="submission" date="1996-07" db="EMBL/GenBank/DDBJ databases">
        <title>Bovine estrogen receptor hormone-binding domain, exons V to VII.</title>
        <authorList>
            <person name="Malayer J.R."/>
        </authorList>
    </citation>
    <scope>NUCLEOTIDE SEQUENCE [MRNA] OF 386-544</scope>
</reference>
<reference key="4">
    <citation type="journal article" date="1997" name="J. Biol. Chem.">
        <title>A subpopulation of estrogen receptors are modified by O-linked N-acetylglucosamine.</title>
        <authorList>
            <person name="Jiang M.S."/>
            <person name="Hart G.W."/>
        </authorList>
    </citation>
    <scope>GLYCOSYLATION</scope>
</reference>
<proteinExistence type="evidence at protein level"/>